<proteinExistence type="evidence at protein level"/>
<comment type="function">
    <text evidence="11">Histone H3 reader which may act as a transcriptional coactivator for KLF6 and KLF9 transcription factors.</text>
</comment>
<comment type="subunit">
    <text evidence="11">Interacts with KLF6 and KLF9 (PubMed:33227311). Interacts via (ZZ-type 2 zinc finger) with histone H3 trimethylated at 'Lys-4' (H3K4me3) and histone H3 acetylated at 'Lys-4' (H3K4ac) (PubMed:33227311).</text>
</comment>
<comment type="alternative products">
    <event type="alternative splicing"/>
    <isoform>
        <id>O43149-1</id>
        <name>1</name>
        <sequence type="displayed"/>
    </isoform>
    <isoform>
        <id>O43149-2</id>
        <name>2</name>
        <sequence type="described" ref="VSP_042268 VSP_042269 VSP_042270"/>
    </isoform>
    <isoform>
        <id>O43149-3</id>
        <name>3</name>
        <sequence type="described" ref="VSP_036989 VSP_025870 VSP_025871"/>
    </isoform>
</comment>
<comment type="tissue specificity">
    <text evidence="8">Expressed at low levels in cerebellum.</text>
</comment>
<comment type="miscellaneous">
    <molecule>Isoform 2</molecule>
    <text evidence="14">Incomplete sequence.</text>
</comment>
<comment type="miscellaneous">
    <molecule>Isoform 3</molecule>
    <text evidence="14">May be due to an intron retention.</text>
</comment>
<comment type="sequence caution" evidence="14">
    <conflict type="erroneous initiation">
        <sequence resource="EMBL-CDS" id="BAA23695"/>
    </conflict>
    <text>Extended N-terminus.</text>
</comment>
<comment type="sequence caution" evidence="14">
    <conflict type="erroneous initiation">
        <sequence resource="EMBL-CDS" id="BAA91834"/>
    </conflict>
    <text>Truncated N-terminus.</text>
</comment>
<sequence length="2961" mass="331075">MGNAPSHSSEDEAAAAGGEGWGPHQDWAAVSGTTPGPGVAAPALPPAAALLEPARLREAAAALLPTPPCESLVSRHRGALFRWLEERLGRGEESVTLEQFRELLEARGAGCSSEQFEEAFAQFDAEGDGTVDAENMLEALKNSSGANLQGELSHIIRQLQACSLVPGFTDIFSESKEGLDIHSSMILRFLHRNRLSSAVMPYPMLEHCNNMCTMRSSVLKESLDQLVQKEKESPGDLTRSPEMDKLKSVAKCYAYIETSSNSADIDKMTNGETSSYWQSDGSACSHWIRLKMKPDVVLRHLSIAVAATDQSYMPQQVTVAVGRNASDLQEVRDVHIPSNVTGYVTLLENANVSQLYVQINIKRCLSDGCDTRIHGLRAVGFQRVKKSGVSVSDASAIWYWSLLTSLVTASMETNPAFVQTVLHNTQKALRHMPPLSLSPGSTDFSTFLSPNVLEEVDSFLIRITSCCSTPEVELTLLAFALARGSVAKVMSSLCTITDHLDTQYDASSLILSMASVRQNLLLKYGKPLQLTLQACDVKGKEDKSGPENLLVEPWTRDGFLTETGKTRASTIFSTGTESAFQVTQIRIMVRRGGIGAQCGLVFAYNSSSDKFCAEEHFKRFEKYDKWKLQELRQFVKSRIGCSSDDLGEDDPIGWFELEEEWDEADVKLQQCRVAKYLMVKFLCTRQESAERLGVQGLTISGYLRPARAEAEQSVTCAHCRKDTEESVCGATLLLRTLQFIQQLAHDLVQQKESGLKYKSFLDFAGLDLQIFWNFYSKLKQNPREECVSAQTLLLQLLQSCFSVLQGDVLAASEEEKAPIQSPKGVEAAKELYTHLCDVVDKVDGDSVPMEILKQEVRNTLLNGAAIFFPNRQTRRNHLFTMMNVTEQEHKQSLQLTFRSLCTYFSDKDPGGLLLLPEKNDLAKMNISEVLAVMDTLVSVAARECELLMLSGAPGEVGSVLFSLFWSVQGSLLSWCYLQLKSTDSGAKDLAVDLIEKYVGQFLASMRAILESLFSQYSGKTIVERLCNSVFSMAARQLVIFLLDFCTLDIPHCVLLREFSVLTELLKKLCSGPEGGLRKLDVETWQQEQPVVLHTWTKESAHNYENNCHEVSVFVSPGATYFEVEFDDRCETEKRYDYLEFTDARGRKTRYDTKVGTDKWPKKVTFKAGPRLQFLFHSDSSHNEWGYKFTVTACGLPDVAVSWGLDLQLLVSRLMGRLASQCMALKSVRQLGSNMVVPQAKMALVLSSPLWKPVFRHQVCPELELEASWPTHPHRNSKEVKNIPDDPCRHFLLDFAQSEPAQNFCGPYSELFKGFIQACRKQAPKTDIVAGSTIDQAVNATFAALVYRTPDLYEKLQKYVNSGGKIALSEEFAQVYSLADGIRIWMLEMKQKSLMSLGNEAEEKHSSEATEVNPESLAKECIEKSLLLLKFLPTGISSKESCEKLETADETSHLQPLNKRQRTSSVVEEHFQASVSPTEAAPPATGDQSPGLGTQPKLPSSSGLPAADVSPATAEEPLSPSTPTRRPPFTRGRLRLLSFRSMEEARLVPTVKEKYPVLKDVMDFIKDQSLSHRSVVKVLSLRKAQAQSILEVLKITQHCAESLGQPHCFHPPFILFLLELLTCQKDFTNYFGHLEGCGADLHKEIRDTYYQLVLFLVKAVKGFSSLNDRSLLPALSCVQTALLHLLDMGWEPNDLAFFVDIQLPDLLMKMSQENISVHDSVISQWSEEDELADAKQNSEWMDECQDGMFEAWYEKIAQEDPEKQRKMHMFIARYCDLLNVDISCDGCDEIAPWHRYRCLQCSDMDLCKTCFLGGVKPEGHGDDHEMVNMEFTCDHCQGLIIGRRMNCNVCDDFDLCYGCYAAKKYSYGHLPTHSITAHPMVTIRISDRQRLIQPYIHNYSWLLFAALALYSAHLASAEDVDGEKLDPQTRSSATTLRSQCMQLVGDCLMKAHQGKGLKALALLGVLPDGDSSLEDQALPVTVPTGASEEQLEKKAVQGAELSEAGNGKRAVHEEIRPVDFKQRNKADKGVSLSKDPSCQTQISDSPADASPPTGLPDAEDSEVSSQKPIEEKAVTPSPEQVFAECSQKRILGLLAAMLPPLKSGPTVPLIDLEHVLPLMFQVVISNAGHLNETYHLTLGLLGQLIIRLLPAEVDAAVIKVLSAKHNLFAAGDSSIVPDGWKTTHLLFSLGAVCLDSRVGLDWACSMAEILRSLNSAPLWRDVIATFTDHCIKQLPFQLKHTNIFTLLVLVGFPQVLCVGTRCVYMDNANEPHNVIILKHFTEKNRAVIVDVKTRKRKTVKDYQLVQKGGGQECGDSRAQLSQYSQHFAFIASHLLQSSMDSHCPEAVEATWVLSLALKGLYKTLKAHGFEEIRATFLQTDLLKLLVKKCSKGTGFSKTWLLRDLEILSIMLYSSKKEINALAEHGDLELDERGDREEEVERPVSSPGDPEQKKLDPLEGLDEPTRICFLMAHDALNAPLHILRAIYELQMKKTDYFFLEVQKRFDGDELTTDERIRSLAQRWQPSKSLRLEEQSAKAVDTDMIILPCLSRPARCDQATAESNPVTQKLISSTESELQQSYAKQRRSKSAALLHKELNCKSKRAVRDYLFRVNEATAVLYARHVLASLLAEWPSHVPVSEDILELSGPAHMTYILDMFMQLEEKHEWEKILQKVLQGCREDMLGTMALAACQFMEEPGMEVQVRESKHPYNNNTNFEDKVHIPGAIYLSIKFDSQCNTEEGCDELAMSSSSDFQQDRHSFSGSQQKWKDFELPGDTLYYRFTSDMSNTEWGYRFTVTAGHLGRFQTGFEILKQMLSEERVVPHLPLAKIWEWLVGVACRQTGHQRLKAIHLLLRIVRCCGHSDLCDLALLKPLWQLFTHMEYGLFEDVTQPGILLPLHRALTELFFVTENRAQELGVLQDYLLALTTDDHLLRCAAQALQNIAAISLAINYPNKATRLWNVEC</sequence>
<name>ZZEF1_HUMAN</name>
<gene>
    <name evidence="15" type="primary">ZZEF1</name>
    <name type="synonym">KIAA0399</name>
</gene>
<keyword id="KW-0007">Acetylation</keyword>
<keyword id="KW-0010">Activator</keyword>
<keyword id="KW-0025">Alternative splicing</keyword>
<keyword id="KW-0449">Lipoprotein</keyword>
<keyword id="KW-0479">Metal-binding</keyword>
<keyword id="KW-0519">Myristate</keyword>
<keyword id="KW-0597">Phosphoprotein</keyword>
<keyword id="KW-1267">Proteomics identification</keyword>
<keyword id="KW-1185">Reference proteome</keyword>
<keyword id="KW-0677">Repeat</keyword>
<keyword id="KW-0804">Transcription</keyword>
<keyword id="KW-0805">Transcription regulation</keyword>
<keyword id="KW-0862">Zinc</keyword>
<keyword id="KW-0863">Zinc-finger</keyword>
<accession>O43149</accession>
<accession>A7MBM5</accession>
<accession>Q6NXG0</accession>
<accession>Q6ZRA1</accession>
<accession>Q6ZSF4</accession>
<accession>Q9NVB9</accession>
<dbReference type="EMBL" id="AB007859">
    <property type="protein sequence ID" value="BAA23695.4"/>
    <property type="status" value="ALT_INIT"/>
    <property type="molecule type" value="mRNA"/>
</dbReference>
<dbReference type="EMBL" id="AK001683">
    <property type="protein sequence ID" value="BAA91834.1"/>
    <property type="status" value="ALT_INIT"/>
    <property type="molecule type" value="mRNA"/>
</dbReference>
<dbReference type="EMBL" id="AK127482">
    <property type="protein sequence ID" value="BAC86999.1"/>
    <property type="molecule type" value="mRNA"/>
</dbReference>
<dbReference type="EMBL" id="AC067815">
    <property type="status" value="NOT_ANNOTATED_CDS"/>
    <property type="molecule type" value="Genomic_DNA"/>
</dbReference>
<dbReference type="EMBL" id="AC087292">
    <property type="status" value="NOT_ANNOTATED_CDS"/>
    <property type="molecule type" value="Genomic_DNA"/>
</dbReference>
<dbReference type="EMBL" id="BC067099">
    <property type="protein sequence ID" value="AAH67099.1"/>
    <property type="molecule type" value="mRNA"/>
</dbReference>
<dbReference type="EMBL" id="BC151836">
    <property type="protein sequence ID" value="AAI51837.1"/>
    <property type="molecule type" value="mRNA"/>
</dbReference>
<dbReference type="CCDS" id="CCDS11043.1">
    <molecule id="O43149-1"/>
</dbReference>
<dbReference type="PIR" id="T00048">
    <property type="entry name" value="T00048"/>
</dbReference>
<dbReference type="RefSeq" id="NP_055928.3">
    <molecule id="O43149-1"/>
    <property type="nucleotide sequence ID" value="NM_015113.3"/>
</dbReference>
<dbReference type="SMR" id="O43149"/>
<dbReference type="BioGRID" id="116757">
    <property type="interactions" value="153"/>
</dbReference>
<dbReference type="ELM" id="O43149"/>
<dbReference type="FunCoup" id="O43149">
    <property type="interactions" value="2512"/>
</dbReference>
<dbReference type="IntAct" id="O43149">
    <property type="interactions" value="105"/>
</dbReference>
<dbReference type="MINT" id="O43149"/>
<dbReference type="STRING" id="9606.ENSP00000371051"/>
<dbReference type="GlyCosmos" id="O43149">
    <property type="glycosylation" value="2 sites, 1 glycan"/>
</dbReference>
<dbReference type="GlyGen" id="O43149">
    <property type="glycosylation" value="4 sites, 1 O-linked glycan (2 sites)"/>
</dbReference>
<dbReference type="iPTMnet" id="O43149"/>
<dbReference type="MetOSite" id="O43149"/>
<dbReference type="PhosphoSitePlus" id="O43149"/>
<dbReference type="SwissPalm" id="O43149"/>
<dbReference type="BioMuta" id="ZZEF1"/>
<dbReference type="jPOST" id="O43149"/>
<dbReference type="MassIVE" id="O43149"/>
<dbReference type="PaxDb" id="9606-ENSP00000371051"/>
<dbReference type="PeptideAtlas" id="O43149"/>
<dbReference type="ProteomicsDB" id="48767">
    <molecule id="O43149-1"/>
</dbReference>
<dbReference type="ProteomicsDB" id="48768">
    <molecule id="O43149-2"/>
</dbReference>
<dbReference type="ProteomicsDB" id="48769">
    <molecule id="O43149-3"/>
</dbReference>
<dbReference type="Pumba" id="O43149"/>
<dbReference type="Antibodypedia" id="23205">
    <property type="antibodies" value="28 antibodies from 8 providers"/>
</dbReference>
<dbReference type="DNASU" id="23140"/>
<dbReference type="Ensembl" id="ENST00000381638.7">
    <molecule id="O43149-1"/>
    <property type="protein sequence ID" value="ENSP00000371051.2"/>
    <property type="gene ID" value="ENSG00000074755.15"/>
</dbReference>
<dbReference type="GeneID" id="23140"/>
<dbReference type="KEGG" id="hsa:23140"/>
<dbReference type="MANE-Select" id="ENST00000381638.7">
    <property type="protein sequence ID" value="ENSP00000371051.2"/>
    <property type="RefSeq nucleotide sequence ID" value="NM_015113.4"/>
    <property type="RefSeq protein sequence ID" value="NP_055928.3"/>
</dbReference>
<dbReference type="UCSC" id="uc002fxe.4">
    <molecule id="O43149-1"/>
    <property type="organism name" value="human"/>
</dbReference>
<dbReference type="AGR" id="HGNC:29027"/>
<dbReference type="CTD" id="23140"/>
<dbReference type="DisGeNET" id="23140"/>
<dbReference type="GeneCards" id="ZZEF1"/>
<dbReference type="HGNC" id="HGNC:29027">
    <property type="gene designation" value="ZZEF1"/>
</dbReference>
<dbReference type="HPA" id="ENSG00000074755">
    <property type="expression patterns" value="Low tissue specificity"/>
</dbReference>
<dbReference type="MIM" id="619459">
    <property type="type" value="gene"/>
</dbReference>
<dbReference type="neXtProt" id="NX_O43149"/>
<dbReference type="OpenTargets" id="ENSG00000074755"/>
<dbReference type="PharmGKB" id="PA134938508"/>
<dbReference type="VEuPathDB" id="HostDB:ENSG00000074755"/>
<dbReference type="eggNOG" id="KOG1426">
    <property type="taxonomic scope" value="Eukaryota"/>
</dbReference>
<dbReference type="GeneTree" id="ENSGT00940000155045"/>
<dbReference type="HOGENOM" id="CLU_000703_0_0_1"/>
<dbReference type="InParanoid" id="O43149"/>
<dbReference type="OMA" id="RPTPPCE"/>
<dbReference type="OrthoDB" id="661148at2759"/>
<dbReference type="PAN-GO" id="O43149">
    <property type="GO annotations" value="0 GO annotations based on evolutionary models"/>
</dbReference>
<dbReference type="PhylomeDB" id="O43149"/>
<dbReference type="TreeFam" id="TF331572"/>
<dbReference type="PathwayCommons" id="O43149"/>
<dbReference type="SignaLink" id="O43149"/>
<dbReference type="BioGRID-ORCS" id="23140">
    <property type="hits" value="6 hits in 1158 CRISPR screens"/>
</dbReference>
<dbReference type="ChiTaRS" id="ZZEF1">
    <property type="organism name" value="human"/>
</dbReference>
<dbReference type="GenomeRNAi" id="23140"/>
<dbReference type="Pharos" id="O43149">
    <property type="development level" value="Tdark"/>
</dbReference>
<dbReference type="PRO" id="PR:O43149"/>
<dbReference type="Proteomes" id="UP000005640">
    <property type="component" value="Chromosome 17"/>
</dbReference>
<dbReference type="RNAct" id="O43149">
    <property type="molecule type" value="protein"/>
</dbReference>
<dbReference type="Bgee" id="ENSG00000074755">
    <property type="expression patterns" value="Expressed in jejunal mucosa and 203 other cell types or tissues"/>
</dbReference>
<dbReference type="ExpressionAtlas" id="O43149">
    <property type="expression patterns" value="baseline and differential"/>
</dbReference>
<dbReference type="GO" id="GO:0005509">
    <property type="term" value="F:calcium ion binding"/>
    <property type="evidence" value="ECO:0007669"/>
    <property type="project" value="InterPro"/>
</dbReference>
<dbReference type="GO" id="GO:0042393">
    <property type="term" value="F:histone binding"/>
    <property type="evidence" value="ECO:0000314"/>
    <property type="project" value="UniProtKB"/>
</dbReference>
<dbReference type="GO" id="GO:0008270">
    <property type="term" value="F:zinc ion binding"/>
    <property type="evidence" value="ECO:0007669"/>
    <property type="project" value="UniProtKB-KW"/>
</dbReference>
<dbReference type="CDD" id="cd08667">
    <property type="entry name" value="APC10-ZZEF1"/>
    <property type="match status" value="1"/>
</dbReference>
<dbReference type="CDD" id="cd02249">
    <property type="entry name" value="ZZ"/>
    <property type="match status" value="1"/>
</dbReference>
<dbReference type="CDD" id="cd02343">
    <property type="entry name" value="ZZ_EF"/>
    <property type="match status" value="1"/>
</dbReference>
<dbReference type="Gene3D" id="3.30.60.90">
    <property type="match status" value="2"/>
</dbReference>
<dbReference type="Gene3D" id="1.10.238.10">
    <property type="entry name" value="EF-hand"/>
    <property type="match status" value="1"/>
</dbReference>
<dbReference type="Gene3D" id="2.60.120.260">
    <property type="entry name" value="Galactose-binding domain-like"/>
    <property type="match status" value="1"/>
</dbReference>
<dbReference type="InterPro" id="IPR004939">
    <property type="entry name" value="APC_su10/DOC_dom"/>
</dbReference>
<dbReference type="InterPro" id="IPR011992">
    <property type="entry name" value="EF-hand-dom_pair"/>
</dbReference>
<dbReference type="InterPro" id="IPR002048">
    <property type="entry name" value="EF_hand_dom"/>
</dbReference>
<dbReference type="InterPro" id="IPR008979">
    <property type="entry name" value="Galactose-bd-like_sf"/>
</dbReference>
<dbReference type="InterPro" id="IPR000433">
    <property type="entry name" value="Znf_ZZ"/>
</dbReference>
<dbReference type="InterPro" id="IPR043145">
    <property type="entry name" value="Znf_ZZ_sf"/>
</dbReference>
<dbReference type="InterPro" id="IPR040099">
    <property type="entry name" value="ZZEF1"/>
</dbReference>
<dbReference type="InterPro" id="IPR047052">
    <property type="entry name" value="ZZEF1_APC10"/>
</dbReference>
<dbReference type="InterPro" id="IPR041986">
    <property type="entry name" value="ZZEF1_ZZ"/>
</dbReference>
<dbReference type="PANTHER" id="PTHR22772">
    <property type="entry name" value="NOVEL ZZ TYPE ZINC FINGER DOMAIN CONTAINING PROTEIN"/>
    <property type="match status" value="1"/>
</dbReference>
<dbReference type="PANTHER" id="PTHR22772:SF4">
    <property type="entry name" value="ZINC FINGER ZZ-TYPE AND EF-HAND DOMAIN-CONTAINING PROTEIN 1"/>
    <property type="match status" value="1"/>
</dbReference>
<dbReference type="Pfam" id="PF03256">
    <property type="entry name" value="ANAPC10"/>
    <property type="match status" value="1"/>
</dbReference>
<dbReference type="Pfam" id="PF00569">
    <property type="entry name" value="ZZ"/>
    <property type="match status" value="2"/>
</dbReference>
<dbReference type="SMART" id="SM01337">
    <property type="entry name" value="APC10"/>
    <property type="match status" value="1"/>
</dbReference>
<dbReference type="SMART" id="SM00054">
    <property type="entry name" value="EFh"/>
    <property type="match status" value="1"/>
</dbReference>
<dbReference type="SMART" id="SM00291">
    <property type="entry name" value="ZnF_ZZ"/>
    <property type="match status" value="2"/>
</dbReference>
<dbReference type="SUPFAM" id="SSF47473">
    <property type="entry name" value="EF-hand"/>
    <property type="match status" value="1"/>
</dbReference>
<dbReference type="SUPFAM" id="SSF49785">
    <property type="entry name" value="Galactose-binding domain-like"/>
    <property type="match status" value="1"/>
</dbReference>
<dbReference type="SUPFAM" id="SSF57850">
    <property type="entry name" value="RING/U-box"/>
    <property type="match status" value="2"/>
</dbReference>
<dbReference type="PROSITE" id="PS51284">
    <property type="entry name" value="DOC"/>
    <property type="match status" value="1"/>
</dbReference>
<dbReference type="PROSITE" id="PS50222">
    <property type="entry name" value="EF_HAND_2"/>
    <property type="match status" value="1"/>
</dbReference>
<dbReference type="PROSITE" id="PS01357">
    <property type="entry name" value="ZF_ZZ_1"/>
    <property type="match status" value="1"/>
</dbReference>
<dbReference type="PROSITE" id="PS50135">
    <property type="entry name" value="ZF_ZZ_2"/>
    <property type="match status" value="2"/>
</dbReference>
<evidence type="ECO:0000250" key="1">
    <source>
        <dbReference type="UniProtKB" id="Q5SSH7"/>
    </source>
</evidence>
<evidence type="ECO:0000255" key="2">
    <source>
        <dbReference type="PROSITE-ProRule" id="PRU00228"/>
    </source>
</evidence>
<evidence type="ECO:0000255" key="3">
    <source>
        <dbReference type="PROSITE-ProRule" id="PRU00448"/>
    </source>
</evidence>
<evidence type="ECO:0000255" key="4">
    <source>
        <dbReference type="PROSITE-ProRule" id="PRU00614"/>
    </source>
</evidence>
<evidence type="ECO:0000256" key="5">
    <source>
        <dbReference type="SAM" id="MobiDB-lite"/>
    </source>
</evidence>
<evidence type="ECO:0000269" key="6">
    <source>
    </source>
</evidence>
<evidence type="ECO:0000269" key="7">
    <source>
    </source>
</evidence>
<evidence type="ECO:0000269" key="8">
    <source>
    </source>
</evidence>
<evidence type="ECO:0000269" key="9">
    <source>
    </source>
</evidence>
<evidence type="ECO:0000269" key="10">
    <source>
    </source>
</evidence>
<evidence type="ECO:0000269" key="11">
    <source>
    </source>
</evidence>
<evidence type="ECO:0000269" key="12">
    <source>
    </source>
</evidence>
<evidence type="ECO:0000303" key="13">
    <source>
    </source>
</evidence>
<evidence type="ECO:0000305" key="14"/>
<evidence type="ECO:0000312" key="15">
    <source>
        <dbReference type="HGNC" id="HGNC:29027"/>
    </source>
</evidence>
<evidence type="ECO:0007744" key="16">
    <source>
    </source>
</evidence>
<evidence type="ECO:0007744" key="17">
    <source>
    </source>
</evidence>
<evidence type="ECO:0007744" key="18">
    <source>
    </source>
</evidence>
<evidence type="ECO:0007744" key="19">
    <source>
    </source>
</evidence>
<evidence type="ECO:0007744" key="20">
    <source>
    </source>
</evidence>
<evidence type="ECO:0007744" key="21">
    <source>
    </source>
</evidence>
<organism>
    <name type="scientific">Homo sapiens</name>
    <name type="common">Human</name>
    <dbReference type="NCBI Taxonomy" id="9606"/>
    <lineage>
        <taxon>Eukaryota</taxon>
        <taxon>Metazoa</taxon>
        <taxon>Chordata</taxon>
        <taxon>Craniata</taxon>
        <taxon>Vertebrata</taxon>
        <taxon>Euteleostomi</taxon>
        <taxon>Mammalia</taxon>
        <taxon>Eutheria</taxon>
        <taxon>Euarchontoglires</taxon>
        <taxon>Primates</taxon>
        <taxon>Haplorrhini</taxon>
        <taxon>Catarrhini</taxon>
        <taxon>Hominidae</taxon>
        <taxon>Homo</taxon>
    </lineage>
</organism>
<feature type="initiator methionine" description="Removed">
    <location>
        <position position="1"/>
    </location>
</feature>
<feature type="chain" id="PRO_0000289000" description="Zinc finger ZZ-type and EF-hand domain-containing protein 1">
    <location>
        <begin position="2"/>
        <end position="2961"/>
    </location>
</feature>
<feature type="domain" description="EF-hand" evidence="3">
    <location>
        <begin position="111"/>
        <end position="146"/>
    </location>
</feature>
<feature type="domain" description="DOC" evidence="4">
    <location>
        <begin position="226"/>
        <end position="405"/>
    </location>
</feature>
<feature type="zinc finger region" description="ZZ-type 1" evidence="2">
    <location>
        <begin position="1778"/>
        <end position="1833"/>
    </location>
</feature>
<feature type="zinc finger region" description="ZZ-type 2" evidence="2">
    <location>
        <begin position="1827"/>
        <end position="1882"/>
    </location>
</feature>
<feature type="region of interest" description="Disordered" evidence="5">
    <location>
        <begin position="1"/>
        <end position="41"/>
    </location>
</feature>
<feature type="region of interest" description="Disordered" evidence="5">
    <location>
        <begin position="1446"/>
        <end position="1531"/>
    </location>
</feature>
<feature type="region of interest" description="Disordered" evidence="5">
    <location>
        <begin position="1994"/>
        <end position="2078"/>
    </location>
</feature>
<feature type="region of interest" description="Disordered" evidence="5">
    <location>
        <begin position="2426"/>
        <end position="2455"/>
    </location>
</feature>
<feature type="compositionally biased region" description="Polar residues" evidence="5">
    <location>
        <begin position="1485"/>
        <end position="1502"/>
    </location>
</feature>
<feature type="compositionally biased region" description="Low complexity" evidence="5">
    <location>
        <begin position="1516"/>
        <end position="1531"/>
    </location>
</feature>
<feature type="compositionally biased region" description="Basic and acidic residues" evidence="5">
    <location>
        <begin position="2009"/>
        <end position="2027"/>
    </location>
</feature>
<feature type="compositionally biased region" description="Polar residues" evidence="5">
    <location>
        <begin position="2033"/>
        <end position="2043"/>
    </location>
</feature>
<feature type="compositionally biased region" description="Basic and acidic residues" evidence="5">
    <location>
        <begin position="2426"/>
        <end position="2440"/>
    </location>
</feature>
<feature type="binding site" evidence="2">
    <location>
        <position position="1783"/>
    </location>
    <ligand>
        <name>Zn(2+)</name>
        <dbReference type="ChEBI" id="CHEBI:29105"/>
        <label>1</label>
    </ligand>
</feature>
<feature type="binding site" evidence="2">
    <location>
        <position position="1786"/>
    </location>
    <ligand>
        <name>Zn(2+)</name>
        <dbReference type="ChEBI" id="CHEBI:29105"/>
        <label>1</label>
    </ligand>
</feature>
<feature type="binding site" evidence="2">
    <location>
        <position position="1797"/>
    </location>
    <ligand>
        <name>Zn(2+)</name>
        <dbReference type="ChEBI" id="CHEBI:29105"/>
        <label>2</label>
    </ligand>
</feature>
<feature type="binding site" evidence="2">
    <location>
        <position position="1800"/>
    </location>
    <ligand>
        <name>Zn(2+)</name>
        <dbReference type="ChEBI" id="CHEBI:29105"/>
        <label>2</label>
    </ligand>
</feature>
<feature type="binding site" evidence="2">
    <location>
        <position position="1806"/>
    </location>
    <ligand>
        <name>Zn(2+)</name>
        <dbReference type="ChEBI" id="CHEBI:29105"/>
        <label>1</label>
    </ligand>
</feature>
<feature type="binding site" evidence="2">
    <location>
        <position position="1809"/>
    </location>
    <ligand>
        <name>Zn(2+)</name>
        <dbReference type="ChEBI" id="CHEBI:29105"/>
        <label>1</label>
    </ligand>
</feature>
<feature type="binding site" evidence="2">
    <location>
        <position position="1819"/>
    </location>
    <ligand>
        <name>Zn(2+)</name>
        <dbReference type="ChEBI" id="CHEBI:29105"/>
        <label>2</label>
    </ligand>
</feature>
<feature type="binding site" evidence="2">
    <location>
        <position position="1823"/>
    </location>
    <ligand>
        <name>Zn(2+)</name>
        <dbReference type="ChEBI" id="CHEBI:29105"/>
        <label>2</label>
    </ligand>
</feature>
<feature type="binding site" evidence="2">
    <location>
        <position position="1832"/>
    </location>
    <ligand>
        <name>Zn(2+)</name>
        <dbReference type="ChEBI" id="CHEBI:29105"/>
        <label>3</label>
    </ligand>
</feature>
<feature type="binding site" evidence="2">
    <location>
        <position position="1835"/>
    </location>
    <ligand>
        <name>Zn(2+)</name>
        <dbReference type="ChEBI" id="CHEBI:29105"/>
        <label>3</label>
    </ligand>
</feature>
<feature type="binding site" evidence="2">
    <location>
        <position position="1846"/>
    </location>
    <ligand>
        <name>Zn(2+)</name>
        <dbReference type="ChEBI" id="CHEBI:29105"/>
        <label>4</label>
    </ligand>
</feature>
<feature type="binding site" evidence="2">
    <location>
        <position position="1849"/>
    </location>
    <ligand>
        <name>Zn(2+)</name>
        <dbReference type="ChEBI" id="CHEBI:29105"/>
        <label>4</label>
    </ligand>
</feature>
<feature type="binding site" evidence="2">
    <location>
        <position position="1855"/>
    </location>
    <ligand>
        <name>Zn(2+)</name>
        <dbReference type="ChEBI" id="CHEBI:29105"/>
        <label>3</label>
    </ligand>
</feature>
<feature type="binding site" evidence="2">
    <location>
        <position position="1858"/>
    </location>
    <ligand>
        <name>Zn(2+)</name>
        <dbReference type="ChEBI" id="CHEBI:29105"/>
        <label>3</label>
    </ligand>
</feature>
<feature type="binding site" evidence="2">
    <location>
        <position position="1868"/>
    </location>
    <ligand>
        <name>Zn(2+)</name>
        <dbReference type="ChEBI" id="CHEBI:29105"/>
        <label>4</label>
    </ligand>
</feature>
<feature type="binding site" evidence="2">
    <location>
        <position position="1872"/>
    </location>
    <ligand>
        <name>Zn(2+)</name>
        <dbReference type="ChEBI" id="CHEBI:29105"/>
        <label>4</label>
    </ligand>
</feature>
<feature type="modified residue" description="Phosphoserine" evidence="20">
    <location>
        <position position="240"/>
    </location>
</feature>
<feature type="modified residue" description="Phosphoserine" evidence="19">
    <location>
        <position position="1475"/>
    </location>
</feature>
<feature type="modified residue" description="Phosphoserine" evidence="1">
    <location>
        <position position="1488"/>
    </location>
</feature>
<feature type="modified residue" description="Phosphoserine" evidence="16 17">
    <location>
        <position position="1509"/>
    </location>
</feature>
<feature type="modified residue" description="Phosphothreonine" evidence="21">
    <location>
        <position position="1512"/>
    </location>
</feature>
<feature type="modified residue" description="Phosphoserine" evidence="16 17">
    <location>
        <position position="1518"/>
    </location>
</feature>
<feature type="modified residue" description="Phosphothreonine" evidence="1">
    <location>
        <position position="1521"/>
    </location>
</feature>
<feature type="modified residue" description="Phosphothreonine" evidence="21">
    <location>
        <position position="1523"/>
    </location>
</feature>
<feature type="modified residue" description="Phosphoserine" evidence="20">
    <location>
        <position position="1537"/>
    </location>
</feature>
<feature type="modified residue" description="Phosphoserine" evidence="20">
    <location>
        <position position="1540"/>
    </location>
</feature>
<feature type="modified residue" description="Phosphoserine" evidence="20">
    <location>
        <position position="2444"/>
    </location>
</feature>
<feature type="modified residue" description="N6-acetyllysine" evidence="18">
    <location>
        <position position="2667"/>
    </location>
</feature>
<feature type="lipid moiety-binding region" description="N-myristoyl glycine" evidence="9 10">
    <location>
        <position position="2"/>
    </location>
</feature>
<feature type="splice variant" id="VSP_042268" description="In isoform 2." evidence="13">
    <location>
        <begin position="1"/>
        <end position="1686"/>
    </location>
</feature>
<feature type="splice variant" id="VSP_036989" description="In isoform 3." evidence="13">
    <original>M</original>
    <variation>MK</variation>
    <location>
        <position position="882"/>
    </location>
</feature>
<feature type="splice variant" id="VSP_025870" description="In isoform 3." evidence="13">
    <original>LDVETW</original>
    <variation>VTRVST</variation>
    <location>
        <begin position="1079"/>
        <end position="1084"/>
    </location>
</feature>
<feature type="splice variant" id="VSP_025871" description="In isoform 3." evidence="13">
    <location>
        <begin position="1085"/>
        <end position="2961"/>
    </location>
</feature>
<feature type="splice variant" id="VSP_042269" description="In isoform 2." evidence="13">
    <original>ILSIMLYSSKKEINALAEHG</original>
    <variation>VRDERDSCSSFLVQMCWPRS</variation>
    <location>
        <begin position="2405"/>
        <end position="2424"/>
    </location>
</feature>
<feature type="splice variant" id="VSP_042270" description="In isoform 2." evidence="13">
    <location>
        <begin position="2425"/>
        <end position="2961"/>
    </location>
</feature>
<feature type="sequence variant" id="VAR_032551" description="In dbSNP:rs1454121." evidence="6">
    <original>V</original>
    <variation>A</variation>
    <location>
        <position position="30"/>
    </location>
</feature>
<feature type="sequence variant" id="VAR_032552" description="In dbSNP:rs16953687.">
    <original>I</original>
    <variation>V</variation>
    <location>
        <position position="1021"/>
    </location>
</feature>
<feature type="sequence variant" id="VAR_032553" description="In dbSNP:rs4790555.">
    <original>S</original>
    <variation>A</variation>
    <location>
        <position position="1437"/>
    </location>
</feature>
<feature type="sequence variant" id="VAR_032554" description="In dbSNP:rs781852." evidence="7 12">
    <original>L</original>
    <variation>P</variation>
    <location>
        <position position="1972"/>
    </location>
</feature>
<feature type="sequence variant" id="VAR_032555" description="In dbSNP:rs781831." evidence="7 12">
    <original>I</original>
    <variation>V</variation>
    <location>
        <position position="2014"/>
    </location>
</feature>
<feature type="sequence variant" id="VAR_032556" description="In dbSNP:rs1006954.">
    <original>P</original>
    <variation>S</variation>
    <location>
        <position position="2051"/>
    </location>
</feature>
<feature type="sequence variant" id="VAR_032557" description="In dbSNP:rs34357158.">
    <original>Y</original>
    <variation>H</variation>
    <location>
        <position position="2301"/>
    </location>
</feature>
<feature type="sequence variant" id="VAR_032558" description="In dbSNP:rs35638819.">
    <original>L</original>
    <variation>P</variation>
    <location>
        <position position="2303"/>
    </location>
</feature>
<feature type="sequence variant" id="VAR_032559" description="In dbSNP:rs711177." evidence="7 12">
    <original>E</original>
    <variation>Q</variation>
    <location>
        <position position="2369"/>
    </location>
</feature>
<feature type="sequence variant" id="VAR_032560" description="In dbSNP:rs781861.">
    <original>A</original>
    <variation>T</variation>
    <location>
        <position position="2421"/>
    </location>
</feature>
<feature type="mutagenesis site" description="Loss of histone H3 binding." evidence="11">
    <original>D</original>
    <variation>A</variation>
    <location>
        <position position="1833"/>
    </location>
</feature>
<feature type="mutagenesis site" description="Loss of histone H3 binding." evidence="11">
    <original>D</original>
    <variation>A</variation>
    <location>
        <position position="1853"/>
    </location>
</feature>
<feature type="sequence conflict" description="In Ref. 1; BAA23695 and 5; AAI51837." evidence="14" ref="1 5">
    <original>V</original>
    <variation>A</variation>
    <location>
        <position position="959"/>
    </location>
</feature>
<feature type="sequence conflict" description="In Ref. 3; BAA91834." evidence="14" ref="3">
    <original>R</original>
    <variation>H</variation>
    <location>
        <position position="1929"/>
    </location>
</feature>
<reference key="1">
    <citation type="journal article" date="1997" name="DNA Res.">
        <title>Prediction of the coding sequences of unidentified human genes. VIII. 78 new cDNA clones from brain which code for large proteins in vitro.</title>
        <authorList>
            <person name="Ishikawa K."/>
            <person name="Nagase T."/>
            <person name="Nakajima D."/>
            <person name="Seki N."/>
            <person name="Ohira M."/>
            <person name="Miyajima N."/>
            <person name="Tanaka A."/>
            <person name="Kotani H."/>
            <person name="Nomura N."/>
            <person name="Ohara O."/>
        </authorList>
    </citation>
    <scope>NUCLEOTIDE SEQUENCE [LARGE SCALE MRNA] (ISOFORM 1)</scope>
    <scope>VARIANTS PRO-1972; VAL-2014 AND GLN-2369</scope>
    <source>
        <tissue>Brain</tissue>
    </source>
</reference>
<reference key="2">
    <citation type="journal article" date="2002" name="DNA Res.">
        <title>Construction of expression-ready cDNA clones for KIAA genes: manual curation of 330 KIAA cDNA clones.</title>
        <authorList>
            <person name="Nakajima D."/>
            <person name="Okazaki N."/>
            <person name="Yamakawa H."/>
            <person name="Kikuno R."/>
            <person name="Ohara O."/>
            <person name="Nagase T."/>
        </authorList>
    </citation>
    <scope>SEQUENCE REVISION</scope>
</reference>
<reference key="3">
    <citation type="journal article" date="2004" name="Nat. Genet.">
        <title>Complete sequencing and characterization of 21,243 full-length human cDNAs.</title>
        <authorList>
            <person name="Ota T."/>
            <person name="Suzuki Y."/>
            <person name="Nishikawa T."/>
            <person name="Otsuki T."/>
            <person name="Sugiyama T."/>
            <person name="Irie R."/>
            <person name="Wakamatsu A."/>
            <person name="Hayashi K."/>
            <person name="Sato H."/>
            <person name="Nagai K."/>
            <person name="Kimura K."/>
            <person name="Makita H."/>
            <person name="Sekine M."/>
            <person name="Obayashi M."/>
            <person name="Nishi T."/>
            <person name="Shibahara T."/>
            <person name="Tanaka T."/>
            <person name="Ishii S."/>
            <person name="Yamamoto J."/>
            <person name="Saito K."/>
            <person name="Kawai Y."/>
            <person name="Isono Y."/>
            <person name="Nakamura Y."/>
            <person name="Nagahari K."/>
            <person name="Murakami K."/>
            <person name="Yasuda T."/>
            <person name="Iwayanagi T."/>
            <person name="Wagatsuma M."/>
            <person name="Shiratori A."/>
            <person name="Sudo H."/>
            <person name="Hosoiri T."/>
            <person name="Kaku Y."/>
            <person name="Kodaira H."/>
            <person name="Kondo H."/>
            <person name="Sugawara M."/>
            <person name="Takahashi M."/>
            <person name="Kanda K."/>
            <person name="Yokoi T."/>
            <person name="Furuya T."/>
            <person name="Kikkawa E."/>
            <person name="Omura Y."/>
            <person name="Abe K."/>
            <person name="Kamihara K."/>
            <person name="Katsuta N."/>
            <person name="Sato K."/>
            <person name="Tanikawa M."/>
            <person name="Yamazaki M."/>
            <person name="Ninomiya K."/>
            <person name="Ishibashi T."/>
            <person name="Yamashita H."/>
            <person name="Murakawa K."/>
            <person name="Fujimori K."/>
            <person name="Tanai H."/>
            <person name="Kimata M."/>
            <person name="Watanabe M."/>
            <person name="Hiraoka S."/>
            <person name="Chiba Y."/>
            <person name="Ishida S."/>
            <person name="Ono Y."/>
            <person name="Takiguchi S."/>
            <person name="Watanabe S."/>
            <person name="Yosida M."/>
            <person name="Hotuta T."/>
            <person name="Kusano J."/>
            <person name="Kanehori K."/>
            <person name="Takahashi-Fujii A."/>
            <person name="Hara H."/>
            <person name="Tanase T.-O."/>
            <person name="Nomura Y."/>
            <person name="Togiya S."/>
            <person name="Komai F."/>
            <person name="Hara R."/>
            <person name="Takeuchi K."/>
            <person name="Arita M."/>
            <person name="Imose N."/>
            <person name="Musashino K."/>
            <person name="Yuuki H."/>
            <person name="Oshima A."/>
            <person name="Sasaki N."/>
            <person name="Aotsuka S."/>
            <person name="Yoshikawa Y."/>
            <person name="Matsunawa H."/>
            <person name="Ichihara T."/>
            <person name="Shiohata N."/>
            <person name="Sano S."/>
            <person name="Moriya S."/>
            <person name="Momiyama H."/>
            <person name="Satoh N."/>
            <person name="Takami S."/>
            <person name="Terashima Y."/>
            <person name="Suzuki O."/>
            <person name="Nakagawa S."/>
            <person name="Senoh A."/>
            <person name="Mizoguchi H."/>
            <person name="Goto Y."/>
            <person name="Shimizu F."/>
            <person name="Wakebe H."/>
            <person name="Hishigaki H."/>
            <person name="Watanabe T."/>
            <person name="Sugiyama A."/>
            <person name="Takemoto M."/>
            <person name="Kawakami B."/>
            <person name="Yamazaki M."/>
            <person name="Watanabe K."/>
            <person name="Kumagai A."/>
            <person name="Itakura S."/>
            <person name="Fukuzumi Y."/>
            <person name="Fujimori Y."/>
            <person name="Komiyama M."/>
            <person name="Tashiro H."/>
            <person name="Tanigami A."/>
            <person name="Fujiwara T."/>
            <person name="Ono T."/>
            <person name="Yamada K."/>
            <person name="Fujii Y."/>
            <person name="Ozaki K."/>
            <person name="Hirao M."/>
            <person name="Ohmori Y."/>
            <person name="Kawabata A."/>
            <person name="Hikiji T."/>
            <person name="Kobatake N."/>
            <person name="Inagaki H."/>
            <person name="Ikema Y."/>
            <person name="Okamoto S."/>
            <person name="Okitani R."/>
            <person name="Kawakami T."/>
            <person name="Noguchi S."/>
            <person name="Itoh T."/>
            <person name="Shigeta K."/>
            <person name="Senba T."/>
            <person name="Matsumura K."/>
            <person name="Nakajima Y."/>
            <person name="Mizuno T."/>
            <person name="Morinaga M."/>
            <person name="Sasaki M."/>
            <person name="Togashi T."/>
            <person name="Oyama M."/>
            <person name="Hata H."/>
            <person name="Watanabe M."/>
            <person name="Komatsu T."/>
            <person name="Mizushima-Sugano J."/>
            <person name="Satoh T."/>
            <person name="Shirai Y."/>
            <person name="Takahashi Y."/>
            <person name="Nakagawa K."/>
            <person name="Okumura K."/>
            <person name="Nagase T."/>
            <person name="Nomura N."/>
            <person name="Kikuchi H."/>
            <person name="Masuho Y."/>
            <person name="Yamashita R."/>
            <person name="Nakai K."/>
            <person name="Yada T."/>
            <person name="Nakamura Y."/>
            <person name="Ohara O."/>
            <person name="Isogai T."/>
            <person name="Sugano S."/>
        </authorList>
    </citation>
    <scope>NUCLEOTIDE SEQUENCE [LARGE SCALE MRNA] (ISOFORM 3)</scope>
    <scope>NUCLEOTIDE SEQUENCE [LARGE SCALE MRNA] OF 1614-2961 (ISOFORM 2)</scope>
    <scope>VARIANT ALA-30</scope>
    <source>
        <tissue>Teratocarcinoma</tissue>
        <tissue>Thalamus</tissue>
    </source>
</reference>
<reference key="4">
    <citation type="journal article" date="2006" name="Nature">
        <title>DNA sequence of human chromosome 17 and analysis of rearrangement in the human lineage.</title>
        <authorList>
            <person name="Zody M.C."/>
            <person name="Garber M."/>
            <person name="Adams D.J."/>
            <person name="Sharpe T."/>
            <person name="Harrow J."/>
            <person name="Lupski J.R."/>
            <person name="Nicholson C."/>
            <person name="Searle S.M."/>
            <person name="Wilming L."/>
            <person name="Young S.K."/>
            <person name="Abouelleil A."/>
            <person name="Allen N.R."/>
            <person name="Bi W."/>
            <person name="Bloom T."/>
            <person name="Borowsky M.L."/>
            <person name="Bugalter B.E."/>
            <person name="Butler J."/>
            <person name="Chang J.L."/>
            <person name="Chen C.-K."/>
            <person name="Cook A."/>
            <person name="Corum B."/>
            <person name="Cuomo C.A."/>
            <person name="de Jong P.J."/>
            <person name="DeCaprio D."/>
            <person name="Dewar K."/>
            <person name="FitzGerald M."/>
            <person name="Gilbert J."/>
            <person name="Gibson R."/>
            <person name="Gnerre S."/>
            <person name="Goldstein S."/>
            <person name="Grafham D.V."/>
            <person name="Grocock R."/>
            <person name="Hafez N."/>
            <person name="Hagopian D.S."/>
            <person name="Hart E."/>
            <person name="Norman C.H."/>
            <person name="Humphray S."/>
            <person name="Jaffe D.B."/>
            <person name="Jones M."/>
            <person name="Kamal M."/>
            <person name="Khodiyar V.K."/>
            <person name="LaButti K."/>
            <person name="Laird G."/>
            <person name="Lehoczky J."/>
            <person name="Liu X."/>
            <person name="Lokyitsang T."/>
            <person name="Loveland J."/>
            <person name="Lui A."/>
            <person name="Macdonald P."/>
            <person name="Major J.E."/>
            <person name="Matthews L."/>
            <person name="Mauceli E."/>
            <person name="McCarroll S.A."/>
            <person name="Mihalev A.H."/>
            <person name="Mudge J."/>
            <person name="Nguyen C."/>
            <person name="Nicol R."/>
            <person name="O'Leary S.B."/>
            <person name="Osoegawa K."/>
            <person name="Schwartz D.C."/>
            <person name="Shaw-Smith C."/>
            <person name="Stankiewicz P."/>
            <person name="Steward C."/>
            <person name="Swarbreck D."/>
            <person name="Venkataraman V."/>
            <person name="Whittaker C.A."/>
            <person name="Yang X."/>
            <person name="Zimmer A.R."/>
            <person name="Bradley A."/>
            <person name="Hubbard T."/>
            <person name="Birren B.W."/>
            <person name="Rogers J."/>
            <person name="Lander E.S."/>
            <person name="Nusbaum C."/>
        </authorList>
    </citation>
    <scope>NUCLEOTIDE SEQUENCE [LARGE SCALE GENOMIC DNA]</scope>
</reference>
<reference key="5">
    <citation type="journal article" date="2004" name="Genome Res.">
        <title>The status, quality, and expansion of the NIH full-length cDNA project: the Mammalian Gene Collection (MGC).</title>
        <authorList>
            <consortium name="The MGC Project Team"/>
        </authorList>
    </citation>
    <scope>NUCLEOTIDE SEQUENCE [LARGE SCALE MRNA] (ISOFORM 1)</scope>
    <scope>VARIANTS PRO-1972; VAL-2014 AND GLN-2369</scope>
    <source>
        <tissue>Brain</tissue>
    </source>
</reference>
<reference key="6">
    <citation type="journal article" date="2004" name="Eur. J. Cancer">
        <title>Analysis of transcripts from 17p13.3 in medulloblastoma suggests ROX/MNT as a potential tumour suppressor gene.</title>
        <authorList>
            <person name="Cvekl A. Jr."/>
            <person name="Zavadil J."/>
            <person name="Birshtein B.K."/>
            <person name="Grotzer M.A."/>
            <person name="Cvekl A."/>
        </authorList>
    </citation>
    <scope>TISSUE SPECIFICITY</scope>
</reference>
<reference key="7">
    <citation type="journal article" date="2006" name="Nat. Biotechnol.">
        <title>A probability-based approach for high-throughput protein phosphorylation analysis and site localization.</title>
        <authorList>
            <person name="Beausoleil S.A."/>
            <person name="Villen J."/>
            <person name="Gerber S.A."/>
            <person name="Rush J."/>
            <person name="Gygi S.P."/>
        </authorList>
    </citation>
    <scope>PHOSPHORYLATION [LARGE SCALE ANALYSIS] AT SER-1509 AND SER-1518</scope>
    <scope>IDENTIFICATION BY MASS SPECTROMETRY [LARGE SCALE ANALYSIS]</scope>
    <source>
        <tissue>Cervix carcinoma</tissue>
    </source>
</reference>
<reference key="8">
    <citation type="journal article" date="2008" name="Proc. Natl. Acad. Sci. U.S.A.">
        <title>A quantitative atlas of mitotic phosphorylation.</title>
        <authorList>
            <person name="Dephoure N."/>
            <person name="Zhou C."/>
            <person name="Villen J."/>
            <person name="Beausoleil S.A."/>
            <person name="Bakalarski C.E."/>
            <person name="Elledge S.J."/>
            <person name="Gygi S.P."/>
        </authorList>
    </citation>
    <scope>PHOSPHORYLATION [LARGE SCALE ANALYSIS] AT SER-1509 AND SER-1518</scope>
    <scope>IDENTIFICATION BY MASS SPECTROMETRY [LARGE SCALE ANALYSIS]</scope>
    <source>
        <tissue>Cervix carcinoma</tissue>
    </source>
</reference>
<reference key="9">
    <citation type="journal article" date="2009" name="Anal. Chem.">
        <title>Lys-N and trypsin cover complementary parts of the phosphoproteome in a refined SCX-based approach.</title>
        <authorList>
            <person name="Gauci S."/>
            <person name="Helbig A.O."/>
            <person name="Slijper M."/>
            <person name="Krijgsveld J."/>
            <person name="Heck A.J."/>
            <person name="Mohammed S."/>
        </authorList>
    </citation>
    <scope>IDENTIFICATION BY MASS SPECTROMETRY [LARGE SCALE ANALYSIS]</scope>
</reference>
<reference key="10">
    <citation type="journal article" date="2009" name="Sci. Signal.">
        <title>Quantitative phosphoproteomic analysis of T cell receptor signaling reveals system-wide modulation of protein-protein interactions.</title>
        <authorList>
            <person name="Mayya V."/>
            <person name="Lundgren D.H."/>
            <person name="Hwang S.-I."/>
            <person name="Rezaul K."/>
            <person name="Wu L."/>
            <person name="Eng J.K."/>
            <person name="Rodionov V."/>
            <person name="Han D.K."/>
        </authorList>
    </citation>
    <scope>PHOSPHORYLATION [LARGE SCALE ANALYSIS] AT SER-1475</scope>
    <scope>IDENTIFICATION BY MASS SPECTROMETRY [LARGE SCALE ANALYSIS]</scope>
    <source>
        <tissue>Leukemic T-cell</tissue>
    </source>
</reference>
<reference key="11">
    <citation type="journal article" date="2009" name="Science">
        <title>Lysine acetylation targets protein complexes and co-regulates major cellular functions.</title>
        <authorList>
            <person name="Choudhary C."/>
            <person name="Kumar C."/>
            <person name="Gnad F."/>
            <person name="Nielsen M.L."/>
            <person name="Rehman M."/>
            <person name="Walther T.C."/>
            <person name="Olsen J.V."/>
            <person name="Mann M."/>
        </authorList>
    </citation>
    <scope>ACETYLATION [LARGE SCALE ANALYSIS] AT LYS-2667</scope>
    <scope>IDENTIFICATION BY MASS SPECTROMETRY [LARGE SCALE ANALYSIS]</scope>
</reference>
<reference key="12">
    <citation type="journal article" date="2010" name="Proteomics">
        <title>Strategy for comprehensive identification of human N-myristoylated proteins using an insect cell-free protein synthesis system.</title>
        <authorList>
            <person name="Suzuki T."/>
            <person name="Moriya K."/>
            <person name="Nagatoshi K."/>
            <person name="Ota Y."/>
            <person name="Ezure T."/>
            <person name="Ando E."/>
            <person name="Tsunasawa S."/>
            <person name="Utsumi T."/>
        </authorList>
    </citation>
    <scope>MYRISTOYLATION AT GLY-2</scope>
</reference>
<reference key="13">
    <citation type="journal article" date="2010" name="Sci. Signal.">
        <title>Quantitative phosphoproteomics reveals widespread full phosphorylation site occupancy during mitosis.</title>
        <authorList>
            <person name="Olsen J.V."/>
            <person name="Vermeulen M."/>
            <person name="Santamaria A."/>
            <person name="Kumar C."/>
            <person name="Miller M.L."/>
            <person name="Jensen L.J."/>
            <person name="Gnad F."/>
            <person name="Cox J."/>
            <person name="Jensen T.S."/>
            <person name="Nigg E.A."/>
            <person name="Brunak S."/>
            <person name="Mann M."/>
        </authorList>
    </citation>
    <scope>IDENTIFICATION BY MASS SPECTROMETRY [LARGE SCALE ANALYSIS]</scope>
    <source>
        <tissue>Cervix carcinoma</tissue>
    </source>
</reference>
<reference key="14">
    <citation type="journal article" date="2011" name="BMC Syst. Biol.">
        <title>Initial characterization of the human central proteome.</title>
        <authorList>
            <person name="Burkard T.R."/>
            <person name="Planyavsky M."/>
            <person name="Kaupe I."/>
            <person name="Breitwieser F.P."/>
            <person name="Buerckstuemmer T."/>
            <person name="Bennett K.L."/>
            <person name="Superti-Furga G."/>
            <person name="Colinge J."/>
        </authorList>
    </citation>
    <scope>IDENTIFICATION BY MASS SPECTROMETRY [LARGE SCALE ANALYSIS]</scope>
</reference>
<reference key="15">
    <citation type="journal article" date="2013" name="J. Proteome Res.">
        <title>Toward a comprehensive characterization of a human cancer cell phosphoproteome.</title>
        <authorList>
            <person name="Zhou H."/>
            <person name="Di Palma S."/>
            <person name="Preisinger C."/>
            <person name="Peng M."/>
            <person name="Polat A.N."/>
            <person name="Heck A.J."/>
            <person name="Mohammed S."/>
        </authorList>
    </citation>
    <scope>PHOSPHORYLATION [LARGE SCALE ANALYSIS] AT SER-240; SER-1537; SER-1540 AND SER-2444</scope>
    <scope>IDENTIFICATION BY MASS SPECTROMETRY [LARGE SCALE ANALYSIS]</scope>
    <source>
        <tissue>Cervix carcinoma</tissue>
        <tissue>Erythroleukemia</tissue>
    </source>
</reference>
<reference key="16">
    <citation type="journal article" date="2013" name="PLoS ONE">
        <title>Protein N-myristoylation plays a critical role in the endoplasmic reticulum morphological change induced by overexpression of protein Lunapark, an integral membrane protein of the endoplasmic reticulum.</title>
        <authorList>
            <person name="Moriya K."/>
            <person name="Nagatoshi K."/>
            <person name="Noriyasu Y."/>
            <person name="Okamura T."/>
            <person name="Takamitsu E."/>
            <person name="Suzuki T."/>
            <person name="Utsumi T."/>
        </authorList>
    </citation>
    <scope>MYRISTOYLATION AT GLY-2</scope>
</reference>
<reference key="17">
    <citation type="journal article" date="2014" name="J. Proteomics">
        <title>An enzyme assisted RP-RPLC approach for in-depth analysis of human liver phosphoproteome.</title>
        <authorList>
            <person name="Bian Y."/>
            <person name="Song C."/>
            <person name="Cheng K."/>
            <person name="Dong M."/>
            <person name="Wang F."/>
            <person name="Huang J."/>
            <person name="Sun D."/>
            <person name="Wang L."/>
            <person name="Ye M."/>
            <person name="Zou H."/>
        </authorList>
    </citation>
    <scope>PHOSPHORYLATION [LARGE SCALE ANALYSIS] AT THR-1512 AND THR-1523</scope>
    <scope>IDENTIFICATION BY MASS SPECTROMETRY [LARGE SCALE ANALYSIS]</scope>
    <source>
        <tissue>Liver</tissue>
    </source>
</reference>
<reference key="18">
    <citation type="journal article" date="2021" name="J. Mol. Biol.">
        <title>ZZEF1 is a Histone Reader and Transcriptional Coregulator of Krueppel-Like Factors.</title>
        <authorList>
            <person name="Yu Y."/>
            <person name="Tencer A."/>
            <person name="Xuan H."/>
            <person name="Kutateladze T.G."/>
            <person name="Shi X."/>
        </authorList>
    </citation>
    <scope>FUNCTION</scope>
    <scope>INTERACTION WITH KLF6; KLF9 AND HISTONES H3K4ME3 AND H3K4AC</scope>
    <scope>MUTAGENESIS OF ASP-1833 AND ASP-1853</scope>
</reference>
<protein>
    <recommendedName>
        <fullName evidence="14">Zinc finger ZZ-type and EF-hand domain-containing protein 1</fullName>
    </recommendedName>
</protein>